<gene>
    <name type="primary">csn-3</name>
    <name type="ORF">G11A3.070</name>
    <name type="ORF">NCU01408</name>
</gene>
<reference key="1">
    <citation type="journal article" date="2003" name="Nature">
        <title>The genome sequence of the filamentous fungus Neurospora crassa.</title>
        <authorList>
            <person name="Galagan J.E."/>
            <person name="Calvo S.E."/>
            <person name="Borkovich K.A."/>
            <person name="Selker E.U."/>
            <person name="Read N.D."/>
            <person name="Jaffe D.B."/>
            <person name="FitzHugh W."/>
            <person name="Ma L.-J."/>
            <person name="Smirnov S."/>
            <person name="Purcell S."/>
            <person name="Rehman B."/>
            <person name="Elkins T."/>
            <person name="Engels R."/>
            <person name="Wang S."/>
            <person name="Nielsen C.B."/>
            <person name="Butler J."/>
            <person name="Endrizzi M."/>
            <person name="Qui D."/>
            <person name="Ianakiev P."/>
            <person name="Bell-Pedersen D."/>
            <person name="Nelson M.A."/>
            <person name="Werner-Washburne M."/>
            <person name="Selitrennikoff C.P."/>
            <person name="Kinsey J.A."/>
            <person name="Braun E.L."/>
            <person name="Zelter A."/>
            <person name="Schulte U."/>
            <person name="Kothe G.O."/>
            <person name="Jedd G."/>
            <person name="Mewes H.-W."/>
            <person name="Staben C."/>
            <person name="Marcotte E."/>
            <person name="Greenberg D."/>
            <person name="Roy A."/>
            <person name="Foley K."/>
            <person name="Naylor J."/>
            <person name="Stange-Thomann N."/>
            <person name="Barrett R."/>
            <person name="Gnerre S."/>
            <person name="Kamal M."/>
            <person name="Kamvysselis M."/>
            <person name="Mauceli E.W."/>
            <person name="Bielke C."/>
            <person name="Rudd S."/>
            <person name="Frishman D."/>
            <person name="Krystofova S."/>
            <person name="Rasmussen C."/>
            <person name="Metzenberg R.L."/>
            <person name="Perkins D.D."/>
            <person name="Kroken S."/>
            <person name="Cogoni C."/>
            <person name="Macino G."/>
            <person name="Catcheside D.E.A."/>
            <person name="Li W."/>
            <person name="Pratt R.J."/>
            <person name="Osmani S.A."/>
            <person name="DeSouza C.P.C."/>
            <person name="Glass N.L."/>
            <person name="Orbach M.J."/>
            <person name="Berglund J.A."/>
            <person name="Voelker R."/>
            <person name="Yarden O."/>
            <person name="Plamann M."/>
            <person name="Seiler S."/>
            <person name="Dunlap J.C."/>
            <person name="Radford A."/>
            <person name="Aramayo R."/>
            <person name="Natvig D.O."/>
            <person name="Alex L.A."/>
            <person name="Mannhaupt G."/>
            <person name="Ebbole D.J."/>
            <person name="Freitag M."/>
            <person name="Paulsen I."/>
            <person name="Sachs M.S."/>
            <person name="Lander E.S."/>
            <person name="Nusbaum C."/>
            <person name="Birren B.W."/>
        </authorList>
    </citation>
    <scope>NUCLEOTIDE SEQUENCE [LARGE SCALE GENOMIC DNA]</scope>
    <source>
        <strain>ATCC 24698 / 74-OR23-1A / CBS 708.71 / DSM 1257 / FGSC 987</strain>
    </source>
</reference>
<reference key="2">
    <citation type="journal article" date="2003" name="Nucleic Acids Res.">
        <title>What's in the genome of a filamentous fungus? Analysis of the Neurospora genome sequence.</title>
        <authorList>
            <person name="Mannhaupt G."/>
            <person name="Montrone C."/>
            <person name="Haase D."/>
            <person name="Mewes H.-W."/>
            <person name="Aign V."/>
            <person name="Hoheisel J.D."/>
            <person name="Fartmann B."/>
            <person name="Nyakatura G."/>
            <person name="Kempken F."/>
            <person name="Maier J."/>
            <person name="Schulte U."/>
        </authorList>
    </citation>
    <scope>NUCLEOTIDE SEQUENCE [LARGE SCALE GENOMIC DNA]</scope>
    <source>
        <strain>ATCC 24698 / 74-OR23-1A / CBS 708.71 / DSM 1257 / FGSC 987</strain>
    </source>
</reference>
<reference key="3">
    <citation type="journal article" date="2005" name="Genes Dev.">
        <title>The COP9 signalosome regulates the Neurospora circadian clock by controlling the stability of the SCFFWD-1 complex.</title>
        <authorList>
            <person name="He Q."/>
            <person name="Cheng P."/>
            <person name="He Q."/>
            <person name="Liu Y."/>
        </authorList>
    </citation>
    <scope>IDENTIFICATION BY MASS SPECTROMETRY</scope>
    <scope>IDENTIFICATION IN THE COP9 SIGNALOSOME COMPLEX</scope>
    <scope>FUNCTION OF THE COP9 SIGNALOSOME COMPLEX</scope>
</reference>
<keyword id="KW-0963">Cytoplasm</keyword>
<keyword id="KW-0539">Nucleus</keyword>
<keyword id="KW-1185">Reference proteome</keyword>
<keyword id="KW-0736">Signalosome</keyword>
<dbReference type="EMBL" id="CM002240">
    <property type="protein sequence ID" value="EAA31595.2"/>
    <property type="molecule type" value="Genomic_DNA"/>
</dbReference>
<dbReference type="EMBL" id="BX842619">
    <property type="protein sequence ID" value="CAE76134.1"/>
    <property type="molecule type" value="Genomic_DNA"/>
</dbReference>
<dbReference type="RefSeq" id="XP_960831.2">
    <property type="nucleotide sequence ID" value="XM_955738.3"/>
</dbReference>
<dbReference type="SMR" id="Q7S7G7"/>
<dbReference type="STRING" id="367110.Q7S7G7"/>
<dbReference type="PaxDb" id="5141-EFNCRP00000004201"/>
<dbReference type="EnsemblFungi" id="EAA31595">
    <property type="protein sequence ID" value="EAA31595"/>
    <property type="gene ID" value="NCU01408"/>
</dbReference>
<dbReference type="GeneID" id="3876978"/>
<dbReference type="KEGG" id="ncr:NCU01408"/>
<dbReference type="VEuPathDB" id="FungiDB:NCU01408"/>
<dbReference type="HOGENOM" id="CLU_028825_1_0_1"/>
<dbReference type="InParanoid" id="Q7S7G7"/>
<dbReference type="OMA" id="NHYHDLV"/>
<dbReference type="OrthoDB" id="29061at2759"/>
<dbReference type="Proteomes" id="UP000001805">
    <property type="component" value="Chromosome 2, Linkage Group V"/>
</dbReference>
<dbReference type="GO" id="GO:0008180">
    <property type="term" value="C:COP9 signalosome"/>
    <property type="evidence" value="ECO:0000318"/>
    <property type="project" value="GO_Central"/>
</dbReference>
<dbReference type="GO" id="GO:0005737">
    <property type="term" value="C:cytoplasm"/>
    <property type="evidence" value="ECO:0007669"/>
    <property type="project" value="UniProtKB-SubCell"/>
</dbReference>
<dbReference type="GO" id="GO:0006511">
    <property type="term" value="P:ubiquitin-dependent protein catabolic process"/>
    <property type="evidence" value="ECO:0000318"/>
    <property type="project" value="GO_Central"/>
</dbReference>
<dbReference type="InterPro" id="IPR055089">
    <property type="entry name" value="COP9_N"/>
</dbReference>
<dbReference type="InterPro" id="IPR050756">
    <property type="entry name" value="CSN3"/>
</dbReference>
<dbReference type="InterPro" id="IPR000717">
    <property type="entry name" value="PCI_dom"/>
</dbReference>
<dbReference type="PANTHER" id="PTHR10758">
    <property type="entry name" value="26S PROTEASOME NON-ATPASE REGULATORY SUBUNIT 3/COP9 SIGNALOSOME COMPLEX SUBUNIT 3"/>
    <property type="match status" value="1"/>
</dbReference>
<dbReference type="PANTHER" id="PTHR10758:SF1">
    <property type="entry name" value="COP9 SIGNALOSOME COMPLEX SUBUNIT 3"/>
    <property type="match status" value="1"/>
</dbReference>
<dbReference type="Pfam" id="PF22788">
    <property type="entry name" value="COP9_hel_rpt"/>
    <property type="match status" value="1"/>
</dbReference>
<dbReference type="PROSITE" id="PS50250">
    <property type="entry name" value="PCI"/>
    <property type="match status" value="1"/>
</dbReference>
<comment type="function">
    <text evidence="1 3">Component of the COP9 signalosome (CSN) complex that acts as an regulator of the ubiquitin (Ubl) conjugation pathway by mediating the deneddylation of the cullin subunit of SCF-type E3 ubiquitin-protein ligase complexes (By similarity). The CSN complex is involved in the regulation of the circadian clock through its control of the stability of the SCF(FWD1) complex.</text>
</comment>
<comment type="subunit">
    <text evidence="3">Component of the COP9 signalosome (CSN) complex.</text>
</comment>
<comment type="subcellular location">
    <subcellularLocation>
        <location evidence="1">Cytoplasm</location>
    </subcellularLocation>
    <subcellularLocation>
        <location evidence="1">Nucleus</location>
    </subcellularLocation>
</comment>
<comment type="similarity">
    <text evidence="4">Belongs to the CSN3 family.</text>
</comment>
<evidence type="ECO:0000250" key="1"/>
<evidence type="ECO:0000255" key="2">
    <source>
        <dbReference type="PROSITE-ProRule" id="PRU01185"/>
    </source>
</evidence>
<evidence type="ECO:0000269" key="3">
    <source>
    </source>
</evidence>
<evidence type="ECO:0000305" key="4"/>
<name>CSN3_NEUCR</name>
<feature type="chain" id="PRO_0000314743" description="COP9 signalosome complex subunit 3">
    <location>
        <begin position="1"/>
        <end position="497"/>
    </location>
</feature>
<feature type="domain" description="PCI" evidence="2">
    <location>
        <begin position="233"/>
        <end position="408"/>
    </location>
</feature>
<organism>
    <name type="scientific">Neurospora crassa (strain ATCC 24698 / 74-OR23-1A / CBS 708.71 / DSM 1257 / FGSC 987)</name>
    <dbReference type="NCBI Taxonomy" id="367110"/>
    <lineage>
        <taxon>Eukaryota</taxon>
        <taxon>Fungi</taxon>
        <taxon>Dikarya</taxon>
        <taxon>Ascomycota</taxon>
        <taxon>Pezizomycotina</taxon>
        <taxon>Sordariomycetes</taxon>
        <taxon>Sordariomycetidae</taxon>
        <taxon>Sordariales</taxon>
        <taxon>Sordariaceae</taxon>
        <taxon>Neurospora</taxon>
    </lineage>
</organism>
<accession>Q7S7G7</accession>
<accession>Q6MW17</accession>
<proteinExistence type="evidence at protein level"/>
<sequence>MDARLTVLTAFPPAAGIDNEEYYQNSQQHAKRVRELVRDNAQWIRESADDILKHVNPAVYSLSYLMILEFLLQSPGWTSQQAHESLASYMAQFFLQFDARQIRCKGSTWSDVLKEAYSERGLFPASVAVELVTAALLRLDPSGSIITSHHCNLVELAYNTGNVGALLPLIEKPIIYMPAKGMSTAQPLCDMSLPPPAYINPDSQLTDALTSAAVLQYDFLCGLCFIERRMWQQAFDAFERCVTYPTRDGGCSKIMTEAYNKWILVGLLLTGKPPTLPETTSQAAKKIFATQGKPYKLFAQAFKSETAGDLVREFEVINSELLPNEGNVELAKLVLAHYQRWQIINLRNIYTNISLEKIQERTQSAETGAPLPTVEAVDQLVQSMIADGSLQGAIERPKDGSPAYLTFLSSPAQGMSEVEFSAQVNKVMQGIKALEPIIEATNKRLASNREYISHTVKRQFDAAREHKLGLQSAGGGFEESSFHIEEEEDLMSGLPAH</sequence>
<protein>
    <recommendedName>
        <fullName>COP9 signalosome complex subunit 3</fullName>
        <shortName>Signalosome subunit 3</shortName>
    </recommendedName>
</protein>